<organism>
    <name type="scientific">Yersinia pestis bv. Antiqua (strain Antiqua)</name>
    <dbReference type="NCBI Taxonomy" id="360102"/>
    <lineage>
        <taxon>Bacteria</taxon>
        <taxon>Pseudomonadati</taxon>
        <taxon>Pseudomonadota</taxon>
        <taxon>Gammaproteobacteria</taxon>
        <taxon>Enterobacterales</taxon>
        <taxon>Yersiniaceae</taxon>
        <taxon>Yersinia</taxon>
    </lineage>
</organism>
<keyword id="KW-0067">ATP-binding</keyword>
<keyword id="KW-0119">Carbohydrate metabolism</keyword>
<keyword id="KW-0418">Kinase</keyword>
<keyword id="KW-0479">Metal-binding</keyword>
<keyword id="KW-0547">Nucleotide-binding</keyword>
<keyword id="KW-0808">Transferase</keyword>
<keyword id="KW-0862">Zinc</keyword>
<accession>Q1C5U9</accession>
<sequence>MGKGLALDIGGTKIAAAVVTESGMLIGRQQIATPRGGAGQLAAALETLIAPYRHQVDFIAVASTGIISGGRLTALNPANLGGLADFPLYDCIRSISDLPCVLLNDGQAAAWAEYQALGDKNDNMMFVTVSTGVGGGIILNKKLLVGQRGLAGHIGHTLSDPHGVLCGCGRRGCVESVASGTAIGAETLGWKQPVSAATVFDMAQQGDAQAGKVINRSAAAIAQMLADMKMALDLEVVILGGSVGLAVGYLERVVAAQKTLPGIYRVPVQEAHHRQDSGLLGAALWARTSL</sequence>
<dbReference type="EC" id="2.7.1.60" evidence="1"/>
<dbReference type="EMBL" id="CP000308">
    <property type="protein sequence ID" value="ABG14173.1"/>
    <property type="molecule type" value="Genomic_DNA"/>
</dbReference>
<dbReference type="RefSeq" id="WP_002208516.1">
    <property type="nucleotide sequence ID" value="NZ_CP009906.1"/>
</dbReference>
<dbReference type="SMR" id="Q1C5U9"/>
<dbReference type="KEGG" id="ypa:YPA_2208"/>
<dbReference type="UniPathway" id="UPA00629">
    <property type="reaction ID" value="UER00681"/>
</dbReference>
<dbReference type="Proteomes" id="UP000001971">
    <property type="component" value="Chromosome"/>
</dbReference>
<dbReference type="GO" id="GO:0005524">
    <property type="term" value="F:ATP binding"/>
    <property type="evidence" value="ECO:0007669"/>
    <property type="project" value="UniProtKB-UniRule"/>
</dbReference>
<dbReference type="GO" id="GO:0009384">
    <property type="term" value="F:N-acylmannosamine kinase activity"/>
    <property type="evidence" value="ECO:0007669"/>
    <property type="project" value="UniProtKB-UniRule"/>
</dbReference>
<dbReference type="GO" id="GO:0008270">
    <property type="term" value="F:zinc ion binding"/>
    <property type="evidence" value="ECO:0007669"/>
    <property type="project" value="UniProtKB-UniRule"/>
</dbReference>
<dbReference type="GO" id="GO:0019262">
    <property type="term" value="P:N-acetylneuraminate catabolic process"/>
    <property type="evidence" value="ECO:0007669"/>
    <property type="project" value="UniProtKB-UniRule"/>
</dbReference>
<dbReference type="CDD" id="cd24069">
    <property type="entry name" value="ASKHA_NBD_ROK_EcNanK-like"/>
    <property type="match status" value="1"/>
</dbReference>
<dbReference type="FunFam" id="3.30.420.40:FF:000063">
    <property type="entry name" value="N-acetylmannosamine kinase"/>
    <property type="match status" value="1"/>
</dbReference>
<dbReference type="Gene3D" id="3.30.420.40">
    <property type="match status" value="2"/>
</dbReference>
<dbReference type="HAMAP" id="MF_01234">
    <property type="entry name" value="ManNAc_kinase"/>
    <property type="match status" value="1"/>
</dbReference>
<dbReference type="InterPro" id="IPR043129">
    <property type="entry name" value="ATPase_NBD"/>
</dbReference>
<dbReference type="InterPro" id="IPR023945">
    <property type="entry name" value="ManNAc_kinase_bac"/>
</dbReference>
<dbReference type="InterPro" id="IPR000600">
    <property type="entry name" value="ROK"/>
</dbReference>
<dbReference type="InterPro" id="IPR049874">
    <property type="entry name" value="ROK_cs"/>
</dbReference>
<dbReference type="NCBIfam" id="NF003461">
    <property type="entry name" value="PRK05082.1"/>
    <property type="match status" value="1"/>
</dbReference>
<dbReference type="PANTHER" id="PTHR18964:SF169">
    <property type="entry name" value="N-ACETYLMANNOSAMINE KINASE"/>
    <property type="match status" value="1"/>
</dbReference>
<dbReference type="PANTHER" id="PTHR18964">
    <property type="entry name" value="ROK (REPRESSOR, ORF, KINASE) FAMILY"/>
    <property type="match status" value="1"/>
</dbReference>
<dbReference type="Pfam" id="PF00480">
    <property type="entry name" value="ROK"/>
    <property type="match status" value="1"/>
</dbReference>
<dbReference type="SUPFAM" id="SSF53067">
    <property type="entry name" value="Actin-like ATPase domain"/>
    <property type="match status" value="1"/>
</dbReference>
<dbReference type="PROSITE" id="PS01125">
    <property type="entry name" value="ROK"/>
    <property type="match status" value="1"/>
</dbReference>
<protein>
    <recommendedName>
        <fullName evidence="1">N-acetylmannosamine kinase</fullName>
        <ecNumber evidence="1">2.7.1.60</ecNumber>
    </recommendedName>
    <alternativeName>
        <fullName evidence="1">ManNAc kinase</fullName>
    </alternativeName>
    <alternativeName>
        <fullName evidence="1">N-acetyl-D-mannosamine kinase</fullName>
    </alternativeName>
</protein>
<reference key="1">
    <citation type="journal article" date="2006" name="J. Bacteriol.">
        <title>Complete genome sequence of Yersinia pestis strains Antiqua and Nepal516: evidence of gene reduction in an emerging pathogen.</title>
        <authorList>
            <person name="Chain P.S.G."/>
            <person name="Hu P."/>
            <person name="Malfatti S.A."/>
            <person name="Radnedge L."/>
            <person name="Larimer F."/>
            <person name="Vergez L.M."/>
            <person name="Worsham P."/>
            <person name="Chu M.C."/>
            <person name="Andersen G.L."/>
        </authorList>
    </citation>
    <scope>NUCLEOTIDE SEQUENCE [LARGE SCALE GENOMIC DNA]</scope>
    <source>
        <strain>Antiqua</strain>
    </source>
</reference>
<gene>
    <name evidence="1" type="primary">nanK</name>
    <name type="ordered locus">YPA_2208</name>
</gene>
<feature type="chain" id="PRO_0000301462" description="N-acetylmannosamine kinase">
    <location>
        <begin position="1"/>
        <end position="290"/>
    </location>
</feature>
<feature type="binding site" evidence="1">
    <location>
        <begin position="6"/>
        <end position="13"/>
    </location>
    <ligand>
        <name>ATP</name>
        <dbReference type="ChEBI" id="CHEBI:30616"/>
    </ligand>
</feature>
<feature type="binding site" evidence="1">
    <location>
        <begin position="132"/>
        <end position="139"/>
    </location>
    <ligand>
        <name>ATP</name>
        <dbReference type="ChEBI" id="CHEBI:30616"/>
    </ligand>
</feature>
<feature type="binding site" evidence="1">
    <location>
        <position position="156"/>
    </location>
    <ligand>
        <name>Zn(2+)</name>
        <dbReference type="ChEBI" id="CHEBI:29105"/>
    </ligand>
</feature>
<feature type="binding site" evidence="1">
    <location>
        <position position="166"/>
    </location>
    <ligand>
        <name>Zn(2+)</name>
        <dbReference type="ChEBI" id="CHEBI:29105"/>
    </ligand>
</feature>
<feature type="binding site" evidence="1">
    <location>
        <position position="168"/>
    </location>
    <ligand>
        <name>Zn(2+)</name>
        <dbReference type="ChEBI" id="CHEBI:29105"/>
    </ligand>
</feature>
<feature type="binding site" evidence="1">
    <location>
        <position position="173"/>
    </location>
    <ligand>
        <name>Zn(2+)</name>
        <dbReference type="ChEBI" id="CHEBI:29105"/>
    </ligand>
</feature>
<evidence type="ECO:0000255" key="1">
    <source>
        <dbReference type="HAMAP-Rule" id="MF_01234"/>
    </source>
</evidence>
<proteinExistence type="inferred from homology"/>
<name>NANK_YERPA</name>
<comment type="function">
    <text evidence="1">Catalyzes the phosphorylation of N-acetylmannosamine (ManNAc) to ManNAc-6-P.</text>
</comment>
<comment type="catalytic activity">
    <reaction evidence="1">
        <text>an N-acyl-D-mannosamine + ATP = an N-acyl-D-mannosamine 6-phosphate + ADP + H(+)</text>
        <dbReference type="Rhea" id="RHEA:23832"/>
        <dbReference type="ChEBI" id="CHEBI:15378"/>
        <dbReference type="ChEBI" id="CHEBI:16062"/>
        <dbReference type="ChEBI" id="CHEBI:30616"/>
        <dbReference type="ChEBI" id="CHEBI:57666"/>
        <dbReference type="ChEBI" id="CHEBI:456216"/>
        <dbReference type="EC" id="2.7.1.60"/>
    </reaction>
</comment>
<comment type="pathway">
    <text evidence="1">Amino-sugar metabolism; N-acetylneuraminate degradation; D-fructose 6-phosphate from N-acetylneuraminate: step 2/5.</text>
</comment>
<comment type="subunit">
    <text evidence="1">Homodimer.</text>
</comment>
<comment type="similarity">
    <text evidence="1">Belongs to the ROK (NagC/XylR) family. NanK subfamily.</text>
</comment>